<gene>
    <name evidence="7" type="primary">cdk-12</name>
    <name evidence="7" type="synonym">cdtl-7</name>
    <name evidence="7" type="ORF">B0285.1</name>
</gene>
<organism>
    <name type="scientific">Caenorhabditis elegans</name>
    <dbReference type="NCBI Taxonomy" id="6239"/>
    <lineage>
        <taxon>Eukaryota</taxon>
        <taxon>Metazoa</taxon>
        <taxon>Ecdysozoa</taxon>
        <taxon>Nematoda</taxon>
        <taxon>Chromadorea</taxon>
        <taxon>Rhabditida</taxon>
        <taxon>Rhabditina</taxon>
        <taxon>Rhabditomorpha</taxon>
        <taxon>Rhabditoidea</taxon>
        <taxon>Rhabditidae</taxon>
        <taxon>Peloderinae</taxon>
        <taxon>Caenorhabditis</taxon>
    </lineage>
</organism>
<feature type="chain" id="PRO_0000085716" description="Cyclin-dependent kinase 12">
    <location>
        <begin position="1"/>
        <end position="730"/>
    </location>
</feature>
<feature type="domain" description="Protein kinase" evidence="2">
    <location>
        <begin position="313"/>
        <end position="605"/>
    </location>
</feature>
<feature type="region of interest" description="Disordered" evidence="4">
    <location>
        <begin position="1"/>
        <end position="230"/>
    </location>
</feature>
<feature type="region of interest" description="Disordered" evidence="4">
    <location>
        <begin position="246"/>
        <end position="283"/>
    </location>
</feature>
<feature type="region of interest" description="Disordered" evidence="4">
    <location>
        <begin position="623"/>
        <end position="730"/>
    </location>
</feature>
<feature type="compositionally biased region" description="Basic and acidic residues" evidence="4">
    <location>
        <begin position="9"/>
        <end position="21"/>
    </location>
</feature>
<feature type="compositionally biased region" description="Polar residues" evidence="4">
    <location>
        <begin position="57"/>
        <end position="67"/>
    </location>
</feature>
<feature type="compositionally biased region" description="Basic and acidic residues" evidence="4">
    <location>
        <begin position="75"/>
        <end position="94"/>
    </location>
</feature>
<feature type="compositionally biased region" description="Basic residues" evidence="4">
    <location>
        <begin position="95"/>
        <end position="122"/>
    </location>
</feature>
<feature type="compositionally biased region" description="Basic residues" evidence="4">
    <location>
        <begin position="151"/>
        <end position="163"/>
    </location>
</feature>
<feature type="compositionally biased region" description="Low complexity" evidence="4">
    <location>
        <begin position="194"/>
        <end position="203"/>
    </location>
</feature>
<feature type="compositionally biased region" description="Pro residues" evidence="4">
    <location>
        <begin position="204"/>
        <end position="230"/>
    </location>
</feature>
<feature type="compositionally biased region" description="Basic residues" evidence="4">
    <location>
        <begin position="676"/>
        <end position="688"/>
    </location>
</feature>
<feature type="compositionally biased region" description="Polar residues" evidence="4">
    <location>
        <begin position="714"/>
        <end position="730"/>
    </location>
</feature>
<feature type="active site" description="Proton acceptor" evidence="1 2 3">
    <location>
        <position position="444"/>
    </location>
</feature>
<feature type="binding site" evidence="1 2">
    <location>
        <begin position="317"/>
        <end position="325"/>
    </location>
    <ligand>
        <name>ATP</name>
        <dbReference type="ChEBI" id="CHEBI:30616"/>
    </ligand>
</feature>
<feature type="binding site" evidence="1 2">
    <location>
        <position position="340"/>
    </location>
    <ligand>
        <name>ATP</name>
        <dbReference type="ChEBI" id="CHEBI:30616"/>
    </ligand>
</feature>
<feature type="binding site" evidence="1">
    <location>
        <begin position="398"/>
        <end position="403"/>
    </location>
    <ligand>
        <name>ATP</name>
        <dbReference type="ChEBI" id="CHEBI:30616"/>
    </ligand>
</feature>
<feature type="binding site" evidence="1">
    <location>
        <position position="625"/>
    </location>
    <ligand>
        <name>ATP</name>
        <dbReference type="ChEBI" id="CHEBI:30616"/>
    </ligand>
</feature>
<feature type="splice variant" id="VSP_056771" description="In isoform b." evidence="6">
    <original>R</original>
    <variation>RVFEA</variation>
    <location>
        <position position="659"/>
    </location>
</feature>
<feature type="splice variant" id="VSP_056772" description="In isoform c." evidence="6">
    <original>A</original>
    <variation>AA</variation>
    <location>
        <position position="660"/>
    </location>
</feature>
<reference key="1">
    <citation type="journal article" date="1998" name="Science">
        <title>Genome sequence of the nematode C. elegans: a platform for investigating biology.</title>
        <authorList>
            <consortium name="The C. elegans sequencing consortium"/>
        </authorList>
    </citation>
    <scope>NUCLEOTIDE SEQUENCE [LARGE SCALE GENOMIC DNA]</scope>
    <source>
        <strain>Bristol N2</strain>
    </source>
</reference>
<reference key="2">
    <citation type="journal article" date="2013" name="Development">
        <title>Phosphorylation of RNA polymerase II is independent of P-TEFb in the C. elegans germline.</title>
        <authorList>
            <person name="Bowman E.A."/>
            <person name="Bowman C.R."/>
            <person name="Ahn J.H."/>
            <person name="Kelly W.G."/>
        </authorList>
    </citation>
    <scope>FUNCTION</scope>
    <scope>CATALYTIC ACTIVITY</scope>
    <scope>DISRUPTION PHENOTYPE</scope>
</reference>
<keyword id="KW-0025">Alternative splicing</keyword>
<keyword id="KW-0067">ATP-binding</keyword>
<keyword id="KW-0418">Kinase</keyword>
<keyword id="KW-0547">Nucleotide-binding</keyword>
<keyword id="KW-0539">Nucleus</keyword>
<keyword id="KW-1185">Reference proteome</keyword>
<keyword id="KW-0723">Serine/threonine-protein kinase</keyword>
<keyword id="KW-0808">Transferase</keyword>
<protein>
    <recommendedName>
        <fullName>Cyclin-dependent kinase 12</fullName>
        <ecNumber evidence="5">2.7.11.22</ecNumber>
        <ecNumber evidence="5">2.7.11.23</ecNumber>
    </recommendedName>
    <alternativeName>
        <fullName>Cell division cycle 2-related protein kinase 7</fullName>
    </alternativeName>
    <alternativeName>
        <fullName>Cell division protein kinase 12</fullName>
    </alternativeName>
</protein>
<dbReference type="EC" id="2.7.11.22" evidence="5"/>
<dbReference type="EC" id="2.7.11.23" evidence="5"/>
<dbReference type="EMBL" id="BX284603">
    <property type="protein sequence ID" value="CAA84302.3"/>
    <property type="molecule type" value="Genomic_DNA"/>
</dbReference>
<dbReference type="EMBL" id="BX284603">
    <property type="protein sequence ID" value="CBB15978.1"/>
    <property type="molecule type" value="Genomic_DNA"/>
</dbReference>
<dbReference type="EMBL" id="BX284603">
    <property type="protein sequence ID" value="CBB15981.1"/>
    <property type="molecule type" value="Genomic_DNA"/>
</dbReference>
<dbReference type="PIR" id="T18689">
    <property type="entry name" value="T18689"/>
</dbReference>
<dbReference type="PIR" id="T18697">
    <property type="entry name" value="T18697"/>
</dbReference>
<dbReference type="RefSeq" id="NP_001254914.1">
    <property type="nucleotide sequence ID" value="NM_001267985.1"/>
</dbReference>
<dbReference type="RefSeq" id="NP_001254915.1">
    <property type="nucleotide sequence ID" value="NM_001267986.1"/>
</dbReference>
<dbReference type="RefSeq" id="NP_001254916.1">
    <molecule id="P46551-1"/>
    <property type="nucleotide sequence ID" value="NM_001267987.3"/>
</dbReference>
<dbReference type="RefSeq" id="NP_001367220.1">
    <molecule id="P46551-3"/>
    <property type="nucleotide sequence ID" value="NM_001381836.2"/>
</dbReference>
<dbReference type="RefSeq" id="NP_001367221.1">
    <molecule id="P46551-2"/>
    <property type="nucleotide sequence ID" value="NM_001381837.2"/>
</dbReference>
<dbReference type="SMR" id="P46551"/>
<dbReference type="BioGRID" id="40795">
    <property type="interactions" value="12"/>
</dbReference>
<dbReference type="FunCoup" id="P46551">
    <property type="interactions" value="209"/>
</dbReference>
<dbReference type="STRING" id="6239.B0285.1b.1"/>
<dbReference type="iPTMnet" id="P46551"/>
<dbReference type="PaxDb" id="6239-B0285.1b"/>
<dbReference type="PeptideAtlas" id="P46551"/>
<dbReference type="EnsemblMetazoa" id="B0285.1a.1">
    <molecule id="P46551-1"/>
    <property type="protein sequence ID" value="B0285.1a.1"/>
    <property type="gene ID" value="WBGene00007135"/>
</dbReference>
<dbReference type="EnsemblMetazoa" id="B0285.1a.2">
    <molecule id="P46551-1"/>
    <property type="protein sequence ID" value="B0285.1a.2"/>
    <property type="gene ID" value="WBGene00007135"/>
</dbReference>
<dbReference type="EnsemblMetazoa" id="B0285.1b.1">
    <molecule id="P46551-3"/>
    <property type="protein sequence ID" value="B0285.1b.1"/>
    <property type="gene ID" value="WBGene00007135"/>
</dbReference>
<dbReference type="EnsemblMetazoa" id="B0285.1b.2">
    <molecule id="P46551-3"/>
    <property type="protein sequence ID" value="B0285.1b.2"/>
    <property type="gene ID" value="WBGene00007135"/>
</dbReference>
<dbReference type="EnsemblMetazoa" id="B0285.1c.1">
    <molecule id="P46551-2"/>
    <property type="protein sequence ID" value="B0285.1c.1"/>
    <property type="gene ID" value="WBGene00007135"/>
</dbReference>
<dbReference type="EnsemblMetazoa" id="B0285.1c.2">
    <molecule id="P46551-2"/>
    <property type="protein sequence ID" value="B0285.1c.2"/>
    <property type="gene ID" value="WBGene00007135"/>
</dbReference>
<dbReference type="GeneID" id="175559"/>
<dbReference type="KEGG" id="cel:CELE_B0285.1"/>
<dbReference type="AGR" id="WB:WBGene00007135"/>
<dbReference type="CTD" id="175559"/>
<dbReference type="WormBase" id="B0285.1a">
    <molecule id="P46551-1"/>
    <property type="protein sequence ID" value="CE31401"/>
    <property type="gene ID" value="WBGene00007135"/>
    <property type="gene designation" value="cdk-12"/>
</dbReference>
<dbReference type="WormBase" id="B0285.1b">
    <molecule id="P46551-3"/>
    <property type="protein sequence ID" value="CE44061"/>
    <property type="gene ID" value="WBGene00007135"/>
    <property type="gene designation" value="cdk-12"/>
</dbReference>
<dbReference type="WormBase" id="B0285.1c">
    <molecule id="P46551-2"/>
    <property type="protein sequence ID" value="CE44020"/>
    <property type="gene ID" value="WBGene00007135"/>
    <property type="gene designation" value="cdk-12"/>
</dbReference>
<dbReference type="eggNOG" id="KOG0600">
    <property type="taxonomic scope" value="Eukaryota"/>
</dbReference>
<dbReference type="GeneTree" id="ENSGT00940000176088"/>
<dbReference type="HOGENOM" id="CLU_021707_0_0_1"/>
<dbReference type="InParanoid" id="P46551"/>
<dbReference type="OMA" id="HMEVIWN"/>
<dbReference type="OrthoDB" id="28397at2759"/>
<dbReference type="PhylomeDB" id="P46551"/>
<dbReference type="Reactome" id="R-CEL-6796648">
    <property type="pathway name" value="TP53 Regulates Transcription of DNA Repair Genes"/>
</dbReference>
<dbReference type="Reactome" id="R-CEL-6798695">
    <property type="pathway name" value="Neutrophil degranulation"/>
</dbReference>
<dbReference type="PRO" id="PR:P46551"/>
<dbReference type="Proteomes" id="UP000001940">
    <property type="component" value="Chromosome III"/>
</dbReference>
<dbReference type="Bgee" id="WBGene00007135">
    <property type="expression patterns" value="Expressed in germ line (C elegans) and 4 other cell types or tissues"/>
</dbReference>
<dbReference type="GO" id="GO:0008024">
    <property type="term" value="C:cyclin/CDK positive transcription elongation factor complex"/>
    <property type="evidence" value="ECO:0000318"/>
    <property type="project" value="GO_Central"/>
</dbReference>
<dbReference type="GO" id="GO:0000791">
    <property type="term" value="C:euchromatin"/>
    <property type="evidence" value="ECO:0000314"/>
    <property type="project" value="WormBase"/>
</dbReference>
<dbReference type="GO" id="GO:0005634">
    <property type="term" value="C:nucleus"/>
    <property type="evidence" value="ECO:0000318"/>
    <property type="project" value="GO_Central"/>
</dbReference>
<dbReference type="GO" id="GO:0005524">
    <property type="term" value="F:ATP binding"/>
    <property type="evidence" value="ECO:0007669"/>
    <property type="project" value="UniProtKB-KW"/>
</dbReference>
<dbReference type="GO" id="GO:0030332">
    <property type="term" value="F:cyclin binding"/>
    <property type="evidence" value="ECO:0000318"/>
    <property type="project" value="GO_Central"/>
</dbReference>
<dbReference type="GO" id="GO:0004693">
    <property type="term" value="F:cyclin-dependent protein serine/threonine kinase activity"/>
    <property type="evidence" value="ECO:0007669"/>
    <property type="project" value="UniProtKB-EC"/>
</dbReference>
<dbReference type="GO" id="GO:0106310">
    <property type="term" value="F:protein serine kinase activity"/>
    <property type="evidence" value="ECO:0007669"/>
    <property type="project" value="RHEA"/>
</dbReference>
<dbReference type="GO" id="GO:0008353">
    <property type="term" value="F:RNA polymerase II CTD heptapeptide repeat kinase activity"/>
    <property type="evidence" value="ECO:0000318"/>
    <property type="project" value="GO_Central"/>
</dbReference>
<dbReference type="GO" id="GO:0002119">
    <property type="term" value="P:nematode larval development"/>
    <property type="evidence" value="ECO:0000315"/>
    <property type="project" value="UniProtKB"/>
</dbReference>
<dbReference type="GO" id="GO:0032968">
    <property type="term" value="P:positive regulation of transcription elongation by RNA polymerase II"/>
    <property type="evidence" value="ECO:0000318"/>
    <property type="project" value="GO_Central"/>
</dbReference>
<dbReference type="CDD" id="cd07864">
    <property type="entry name" value="STKc_CDK12"/>
    <property type="match status" value="1"/>
</dbReference>
<dbReference type="FunFam" id="1.10.510.10:FF:000415">
    <property type="entry name" value="CMGC/CDK/CRK7 protein kinase, variant"/>
    <property type="match status" value="1"/>
</dbReference>
<dbReference type="FunFam" id="3.30.200.20:FF:000074">
    <property type="entry name" value="cyclin-dependent kinase 12 isoform X2"/>
    <property type="match status" value="1"/>
</dbReference>
<dbReference type="Gene3D" id="3.30.200.20">
    <property type="entry name" value="Phosphorylase Kinase, domain 1"/>
    <property type="match status" value="1"/>
</dbReference>
<dbReference type="Gene3D" id="1.10.510.10">
    <property type="entry name" value="Transferase(Phosphotransferase) domain 1"/>
    <property type="match status" value="1"/>
</dbReference>
<dbReference type="InterPro" id="IPR050108">
    <property type="entry name" value="CDK"/>
</dbReference>
<dbReference type="InterPro" id="IPR011009">
    <property type="entry name" value="Kinase-like_dom_sf"/>
</dbReference>
<dbReference type="InterPro" id="IPR000719">
    <property type="entry name" value="Prot_kinase_dom"/>
</dbReference>
<dbReference type="InterPro" id="IPR017441">
    <property type="entry name" value="Protein_kinase_ATP_BS"/>
</dbReference>
<dbReference type="InterPro" id="IPR008271">
    <property type="entry name" value="Ser/Thr_kinase_AS"/>
</dbReference>
<dbReference type="PANTHER" id="PTHR24056">
    <property type="entry name" value="CELL DIVISION PROTEIN KINASE"/>
    <property type="match status" value="1"/>
</dbReference>
<dbReference type="PANTHER" id="PTHR24056:SF546">
    <property type="entry name" value="CYCLIN-DEPENDENT KINASE 12"/>
    <property type="match status" value="1"/>
</dbReference>
<dbReference type="Pfam" id="PF00069">
    <property type="entry name" value="Pkinase"/>
    <property type="match status" value="1"/>
</dbReference>
<dbReference type="SMART" id="SM00220">
    <property type="entry name" value="S_TKc"/>
    <property type="match status" value="1"/>
</dbReference>
<dbReference type="SUPFAM" id="SSF56112">
    <property type="entry name" value="Protein kinase-like (PK-like)"/>
    <property type="match status" value="1"/>
</dbReference>
<dbReference type="PROSITE" id="PS00107">
    <property type="entry name" value="PROTEIN_KINASE_ATP"/>
    <property type="match status" value="1"/>
</dbReference>
<dbReference type="PROSITE" id="PS50011">
    <property type="entry name" value="PROTEIN_KINASE_DOM"/>
    <property type="match status" value="1"/>
</dbReference>
<dbReference type="PROSITE" id="PS00108">
    <property type="entry name" value="PROTEIN_KINASE_ST"/>
    <property type="match status" value="1"/>
</dbReference>
<name>CDK12_CAEEL</name>
<comment type="function">
    <text evidence="5">Cyclin-dependent kinase which displays CTD kinase activity: hyperphosphorylates 'Ser-2' in the C-terminal heptapeptide repeat domain (CTD) of the largest RNA polymerase II subunit, thereby acting as a key regulator of transcription elongation. Required for normal reproduction.</text>
</comment>
<comment type="catalytic activity">
    <reaction evidence="5">
        <text>[DNA-directed RNA polymerase] + ATP = phospho-[DNA-directed RNA polymerase] + ADP + H(+)</text>
        <dbReference type="Rhea" id="RHEA:10216"/>
        <dbReference type="Rhea" id="RHEA-COMP:11321"/>
        <dbReference type="Rhea" id="RHEA-COMP:11322"/>
        <dbReference type="ChEBI" id="CHEBI:15378"/>
        <dbReference type="ChEBI" id="CHEBI:30616"/>
        <dbReference type="ChEBI" id="CHEBI:43176"/>
        <dbReference type="ChEBI" id="CHEBI:68546"/>
        <dbReference type="ChEBI" id="CHEBI:456216"/>
        <dbReference type="EC" id="2.7.11.23"/>
    </reaction>
</comment>
<comment type="catalytic activity">
    <reaction evidence="5">
        <text>L-seryl-[protein] + ATP = O-phospho-L-seryl-[protein] + ADP + H(+)</text>
        <dbReference type="Rhea" id="RHEA:17989"/>
        <dbReference type="Rhea" id="RHEA-COMP:9863"/>
        <dbReference type="Rhea" id="RHEA-COMP:11604"/>
        <dbReference type="ChEBI" id="CHEBI:15378"/>
        <dbReference type="ChEBI" id="CHEBI:29999"/>
        <dbReference type="ChEBI" id="CHEBI:30616"/>
        <dbReference type="ChEBI" id="CHEBI:83421"/>
        <dbReference type="ChEBI" id="CHEBI:456216"/>
        <dbReference type="EC" id="2.7.11.22"/>
    </reaction>
</comment>
<comment type="catalytic activity">
    <reaction evidence="5">
        <text>L-threonyl-[protein] + ATP = O-phospho-L-threonyl-[protein] + ADP + H(+)</text>
        <dbReference type="Rhea" id="RHEA:46608"/>
        <dbReference type="Rhea" id="RHEA-COMP:11060"/>
        <dbReference type="Rhea" id="RHEA-COMP:11605"/>
        <dbReference type="ChEBI" id="CHEBI:15378"/>
        <dbReference type="ChEBI" id="CHEBI:30013"/>
        <dbReference type="ChEBI" id="CHEBI:30616"/>
        <dbReference type="ChEBI" id="CHEBI:61977"/>
        <dbReference type="ChEBI" id="CHEBI:456216"/>
        <dbReference type="EC" id="2.7.11.22"/>
    </reaction>
</comment>
<comment type="subcellular location">
    <subcellularLocation>
        <location evidence="1">Nucleus</location>
    </subcellularLocation>
</comment>
<comment type="alternative products">
    <event type="alternative splicing"/>
    <isoform>
        <id>P46551-1</id>
        <name>a</name>
        <sequence type="displayed"/>
    </isoform>
    <isoform>
        <id>P46551-2</id>
        <name>c</name>
        <sequence type="described" ref="VSP_056772"/>
    </isoform>
    <isoform>
        <id>P46551-3</id>
        <name>b</name>
        <sequence type="described" ref="VSP_056771"/>
    </isoform>
</comment>
<comment type="disruption phenotype">
    <text evidence="5">Phosphorylation of 'Ser-2' of the RNA polymerase II C-terminal domain is undetectable in primordial germ cells and reduced by 60% in embryonic somatic nuclei. RNAi treatment causes sterility.</text>
</comment>
<comment type="similarity">
    <text evidence="6">Belongs to the protein kinase superfamily. CMGC Ser/Thr protein kinase family. CDC2/CDKX subfamily.</text>
</comment>
<evidence type="ECO:0000250" key="1">
    <source>
        <dbReference type="UniProtKB" id="Q9NYV4"/>
    </source>
</evidence>
<evidence type="ECO:0000255" key="2">
    <source>
        <dbReference type="PROSITE-ProRule" id="PRU00159"/>
    </source>
</evidence>
<evidence type="ECO:0000255" key="3">
    <source>
        <dbReference type="PROSITE-ProRule" id="PRU10027"/>
    </source>
</evidence>
<evidence type="ECO:0000256" key="4">
    <source>
        <dbReference type="SAM" id="MobiDB-lite"/>
    </source>
</evidence>
<evidence type="ECO:0000269" key="5">
    <source>
    </source>
</evidence>
<evidence type="ECO:0000305" key="6"/>
<evidence type="ECO:0000312" key="7">
    <source>
        <dbReference type="WormBase" id="B0285.1a"/>
    </source>
</evidence>
<accession>P46551</accession>
<accession>C8JQQ9</accession>
<accession>C8JQR0</accession>
<accession>P46552</accession>
<sequence length="730" mass="82429">MEISPGSSTHERDRKGSYGHRERTRSHSGSPSRFYSKDKRGSSRQGVRPRDRDSKDSISPQYKQRNWSRGGGGGGRDRGRNDFSYRKKGKDYNKRRDKRSRSRSRHRSPKRSGSSKKSKRRNSSGSSSSDLMDTSLMSELKKHGDYGSSSKSKKKSRKRRKHSSSSSSSSGEAMDLPVSSNGMNVTAIPPPPSFNINPFQPMFSQPPPPPLPPNSQFMTPPPRPPPAPFSIPPPSVDIHFAATASFSLSSIPPPPPQTDGGASSSKRQDPLPMPPDSKRIATRPVITTRRGHATNRPSDSDSWYKTNLTHYTMLDQIGEGTYGQVYKAVNNLTGEQVALKRVRLENEKEGFPITAIREIKILRQLHHKNIVRLMDIVIDDISMDELKRTRANFYLVFEYVDHDLIGLLESKELVDFNKDQICSLFKQLLEGLAYIHNTGFLHRDIKCSNILVNNKGELKIADLGLARLWEKESRLYTNRVITLWYRPPELLLGDERYGPAIDVWSTGCMLGELFTRKPLFNGNNEFGQLELISKVCGSPNVDNWPELTELVGWNTFRMKRTYQRRIREEFEHIMPREAVDLLDKMLTLNPEKRISAKEALNHPWIRSLEHTTVQPLKLPQHQDCHEMWSKKQKKSARLGRQAEGSSGSGHSIRATSHPRAPTQPSTTTTKSNGSSNHHHHHHHSHHHASSLPPSGGHAPPPPPPPTQASSTSHNNHQPVPQSQYQSVFFK</sequence>
<proteinExistence type="evidence at protein level"/>